<name>NDK_SHESW</name>
<accession>A1RJ60</accession>
<protein>
    <recommendedName>
        <fullName evidence="1">Nucleoside diphosphate kinase</fullName>
        <shortName evidence="1">NDK</shortName>
        <shortName evidence="1">NDP kinase</shortName>
        <ecNumber evidence="1">2.7.4.6</ecNumber>
    </recommendedName>
    <alternativeName>
        <fullName evidence="1">Nucleoside-2-P kinase</fullName>
    </alternativeName>
</protein>
<gene>
    <name evidence="1" type="primary">ndk</name>
    <name type="ordered locus">Sputw3181_1870</name>
</gene>
<keyword id="KW-0067">ATP-binding</keyword>
<keyword id="KW-0963">Cytoplasm</keyword>
<keyword id="KW-0418">Kinase</keyword>
<keyword id="KW-0460">Magnesium</keyword>
<keyword id="KW-0479">Metal-binding</keyword>
<keyword id="KW-0546">Nucleotide metabolism</keyword>
<keyword id="KW-0547">Nucleotide-binding</keyword>
<keyword id="KW-0597">Phosphoprotein</keyword>
<keyword id="KW-0808">Transferase</keyword>
<evidence type="ECO:0000255" key="1">
    <source>
        <dbReference type="HAMAP-Rule" id="MF_00451"/>
    </source>
</evidence>
<organism>
    <name type="scientific">Shewanella sp. (strain W3-18-1)</name>
    <dbReference type="NCBI Taxonomy" id="351745"/>
    <lineage>
        <taxon>Bacteria</taxon>
        <taxon>Pseudomonadati</taxon>
        <taxon>Pseudomonadota</taxon>
        <taxon>Gammaproteobacteria</taxon>
        <taxon>Alteromonadales</taxon>
        <taxon>Shewanellaceae</taxon>
        <taxon>Shewanella</taxon>
    </lineage>
</organism>
<dbReference type="EC" id="2.7.4.6" evidence="1"/>
<dbReference type="EMBL" id="CP000503">
    <property type="protein sequence ID" value="ABM24705.1"/>
    <property type="molecule type" value="Genomic_DNA"/>
</dbReference>
<dbReference type="RefSeq" id="WP_011789197.1">
    <property type="nucleotide sequence ID" value="NC_008750.1"/>
</dbReference>
<dbReference type="SMR" id="A1RJ60"/>
<dbReference type="GeneID" id="67443674"/>
<dbReference type="KEGG" id="shw:Sputw3181_1870"/>
<dbReference type="HOGENOM" id="CLU_060216_8_1_6"/>
<dbReference type="Proteomes" id="UP000002597">
    <property type="component" value="Chromosome"/>
</dbReference>
<dbReference type="GO" id="GO:0005737">
    <property type="term" value="C:cytoplasm"/>
    <property type="evidence" value="ECO:0007669"/>
    <property type="project" value="UniProtKB-SubCell"/>
</dbReference>
<dbReference type="GO" id="GO:0005524">
    <property type="term" value="F:ATP binding"/>
    <property type="evidence" value="ECO:0007669"/>
    <property type="project" value="UniProtKB-UniRule"/>
</dbReference>
<dbReference type="GO" id="GO:0046872">
    <property type="term" value="F:metal ion binding"/>
    <property type="evidence" value="ECO:0007669"/>
    <property type="project" value="UniProtKB-KW"/>
</dbReference>
<dbReference type="GO" id="GO:0004550">
    <property type="term" value="F:nucleoside diphosphate kinase activity"/>
    <property type="evidence" value="ECO:0007669"/>
    <property type="project" value="UniProtKB-UniRule"/>
</dbReference>
<dbReference type="GO" id="GO:0006241">
    <property type="term" value="P:CTP biosynthetic process"/>
    <property type="evidence" value="ECO:0007669"/>
    <property type="project" value="UniProtKB-UniRule"/>
</dbReference>
<dbReference type="GO" id="GO:0006183">
    <property type="term" value="P:GTP biosynthetic process"/>
    <property type="evidence" value="ECO:0007669"/>
    <property type="project" value="UniProtKB-UniRule"/>
</dbReference>
<dbReference type="GO" id="GO:0006228">
    <property type="term" value="P:UTP biosynthetic process"/>
    <property type="evidence" value="ECO:0007669"/>
    <property type="project" value="UniProtKB-UniRule"/>
</dbReference>
<dbReference type="CDD" id="cd04413">
    <property type="entry name" value="NDPk_I"/>
    <property type="match status" value="1"/>
</dbReference>
<dbReference type="FunFam" id="3.30.70.141:FF:000001">
    <property type="entry name" value="Nucleoside diphosphate kinase"/>
    <property type="match status" value="1"/>
</dbReference>
<dbReference type="Gene3D" id="3.30.70.141">
    <property type="entry name" value="Nucleoside diphosphate kinase-like domain"/>
    <property type="match status" value="1"/>
</dbReference>
<dbReference type="HAMAP" id="MF_00451">
    <property type="entry name" value="NDP_kinase"/>
    <property type="match status" value="1"/>
</dbReference>
<dbReference type="InterPro" id="IPR034907">
    <property type="entry name" value="NDK-like_dom"/>
</dbReference>
<dbReference type="InterPro" id="IPR036850">
    <property type="entry name" value="NDK-like_dom_sf"/>
</dbReference>
<dbReference type="InterPro" id="IPR001564">
    <property type="entry name" value="Nucleoside_diP_kinase"/>
</dbReference>
<dbReference type="InterPro" id="IPR023005">
    <property type="entry name" value="Nucleoside_diP_kinase_AS"/>
</dbReference>
<dbReference type="NCBIfam" id="NF001908">
    <property type="entry name" value="PRK00668.1"/>
    <property type="match status" value="1"/>
</dbReference>
<dbReference type="PANTHER" id="PTHR46161">
    <property type="entry name" value="NUCLEOSIDE DIPHOSPHATE KINASE"/>
    <property type="match status" value="1"/>
</dbReference>
<dbReference type="PANTHER" id="PTHR46161:SF3">
    <property type="entry name" value="NUCLEOSIDE DIPHOSPHATE KINASE DDB_G0292928-RELATED"/>
    <property type="match status" value="1"/>
</dbReference>
<dbReference type="Pfam" id="PF00334">
    <property type="entry name" value="NDK"/>
    <property type="match status" value="1"/>
</dbReference>
<dbReference type="PRINTS" id="PR01243">
    <property type="entry name" value="NUCDPKINASE"/>
</dbReference>
<dbReference type="SMART" id="SM00562">
    <property type="entry name" value="NDK"/>
    <property type="match status" value="1"/>
</dbReference>
<dbReference type="SUPFAM" id="SSF54919">
    <property type="entry name" value="Nucleoside diphosphate kinase, NDK"/>
    <property type="match status" value="1"/>
</dbReference>
<dbReference type="PROSITE" id="PS00469">
    <property type="entry name" value="NDPK"/>
    <property type="match status" value="1"/>
</dbReference>
<dbReference type="PROSITE" id="PS51374">
    <property type="entry name" value="NDPK_LIKE"/>
    <property type="match status" value="1"/>
</dbReference>
<reference key="1">
    <citation type="submission" date="2006-12" db="EMBL/GenBank/DDBJ databases">
        <title>Complete sequence of Shewanella sp. W3-18-1.</title>
        <authorList>
            <consortium name="US DOE Joint Genome Institute"/>
            <person name="Copeland A."/>
            <person name="Lucas S."/>
            <person name="Lapidus A."/>
            <person name="Barry K."/>
            <person name="Detter J.C."/>
            <person name="Glavina del Rio T."/>
            <person name="Hammon N."/>
            <person name="Israni S."/>
            <person name="Dalin E."/>
            <person name="Tice H."/>
            <person name="Pitluck S."/>
            <person name="Chain P."/>
            <person name="Malfatti S."/>
            <person name="Shin M."/>
            <person name="Vergez L."/>
            <person name="Schmutz J."/>
            <person name="Larimer F."/>
            <person name="Land M."/>
            <person name="Hauser L."/>
            <person name="Kyrpides N."/>
            <person name="Lykidis A."/>
            <person name="Tiedje J."/>
            <person name="Richardson P."/>
        </authorList>
    </citation>
    <scope>NUCLEOTIDE SEQUENCE [LARGE SCALE GENOMIC DNA]</scope>
    <source>
        <strain>W3-18-1</strain>
    </source>
</reference>
<sequence>MAIERTFSIIKPDAVAKNHIGAIYNRFETAGLKIVAAKMLHLTKEQAEGFYAEHSERGFFGALVAFMTSGPIMVQVLEGENAVLAHREILGATNPAQAAPGTIRADFAESIDENAAHGSDAVESAAREIAYFFSAEELCPRTR</sequence>
<feature type="chain" id="PRO_1000026297" description="Nucleoside diphosphate kinase">
    <location>
        <begin position="1"/>
        <end position="143"/>
    </location>
</feature>
<feature type="active site" description="Pros-phosphohistidine intermediate" evidence="1">
    <location>
        <position position="117"/>
    </location>
</feature>
<feature type="binding site" evidence="1">
    <location>
        <position position="11"/>
    </location>
    <ligand>
        <name>ATP</name>
        <dbReference type="ChEBI" id="CHEBI:30616"/>
    </ligand>
</feature>
<feature type="binding site" evidence="1">
    <location>
        <position position="59"/>
    </location>
    <ligand>
        <name>ATP</name>
        <dbReference type="ChEBI" id="CHEBI:30616"/>
    </ligand>
</feature>
<feature type="binding site" evidence="1">
    <location>
        <position position="87"/>
    </location>
    <ligand>
        <name>ATP</name>
        <dbReference type="ChEBI" id="CHEBI:30616"/>
    </ligand>
</feature>
<feature type="binding site" evidence="1">
    <location>
        <position position="93"/>
    </location>
    <ligand>
        <name>ATP</name>
        <dbReference type="ChEBI" id="CHEBI:30616"/>
    </ligand>
</feature>
<feature type="binding site" evidence="1">
    <location>
        <position position="104"/>
    </location>
    <ligand>
        <name>ATP</name>
        <dbReference type="ChEBI" id="CHEBI:30616"/>
    </ligand>
</feature>
<feature type="binding site" evidence="1">
    <location>
        <position position="114"/>
    </location>
    <ligand>
        <name>ATP</name>
        <dbReference type="ChEBI" id="CHEBI:30616"/>
    </ligand>
</feature>
<proteinExistence type="inferred from homology"/>
<comment type="function">
    <text evidence="1">Major role in the synthesis of nucleoside triphosphates other than ATP. The ATP gamma phosphate is transferred to the NDP beta phosphate via a ping-pong mechanism, using a phosphorylated active-site intermediate.</text>
</comment>
<comment type="catalytic activity">
    <reaction evidence="1">
        <text>a 2'-deoxyribonucleoside 5'-diphosphate + ATP = a 2'-deoxyribonucleoside 5'-triphosphate + ADP</text>
        <dbReference type="Rhea" id="RHEA:44640"/>
        <dbReference type="ChEBI" id="CHEBI:30616"/>
        <dbReference type="ChEBI" id="CHEBI:61560"/>
        <dbReference type="ChEBI" id="CHEBI:73316"/>
        <dbReference type="ChEBI" id="CHEBI:456216"/>
        <dbReference type="EC" id="2.7.4.6"/>
    </reaction>
</comment>
<comment type="catalytic activity">
    <reaction evidence="1">
        <text>a ribonucleoside 5'-diphosphate + ATP = a ribonucleoside 5'-triphosphate + ADP</text>
        <dbReference type="Rhea" id="RHEA:18113"/>
        <dbReference type="ChEBI" id="CHEBI:30616"/>
        <dbReference type="ChEBI" id="CHEBI:57930"/>
        <dbReference type="ChEBI" id="CHEBI:61557"/>
        <dbReference type="ChEBI" id="CHEBI:456216"/>
        <dbReference type="EC" id="2.7.4.6"/>
    </reaction>
</comment>
<comment type="cofactor">
    <cofactor evidence="1">
        <name>Mg(2+)</name>
        <dbReference type="ChEBI" id="CHEBI:18420"/>
    </cofactor>
</comment>
<comment type="subunit">
    <text evidence="1">Homotetramer.</text>
</comment>
<comment type="subcellular location">
    <subcellularLocation>
        <location evidence="1">Cytoplasm</location>
    </subcellularLocation>
</comment>
<comment type="similarity">
    <text evidence="1">Belongs to the NDK family.</text>
</comment>